<name>FPG_COREF</name>
<protein>
    <recommendedName>
        <fullName evidence="2">Formamidopyrimidine-DNA glycosylase</fullName>
        <shortName evidence="2">Fapy-DNA glycosylase</shortName>
        <ecNumber evidence="2">3.2.2.23</ecNumber>
    </recommendedName>
    <alternativeName>
        <fullName evidence="2">DNA-(apurinic or apyrimidinic site) lyase MutM</fullName>
        <shortName evidence="2">AP lyase MutM</shortName>
        <ecNumber evidence="2">4.2.99.18</ecNumber>
    </alternativeName>
</protein>
<evidence type="ECO:0000250" key="1"/>
<evidence type="ECO:0000255" key="2">
    <source>
        <dbReference type="HAMAP-Rule" id="MF_00103"/>
    </source>
</evidence>
<reference key="1">
    <citation type="journal article" date="2003" name="Genome Res.">
        <title>Comparative complete genome sequence analysis of the amino acid replacements responsible for the thermostability of Corynebacterium efficiens.</title>
        <authorList>
            <person name="Nishio Y."/>
            <person name="Nakamura Y."/>
            <person name="Kawarabayasi Y."/>
            <person name="Usuda Y."/>
            <person name="Kimura E."/>
            <person name="Sugimoto S."/>
            <person name="Matsui K."/>
            <person name="Yamagishi A."/>
            <person name="Kikuchi H."/>
            <person name="Ikeo K."/>
            <person name="Gojobori T."/>
        </authorList>
    </citation>
    <scope>NUCLEOTIDE SEQUENCE [LARGE SCALE GENOMIC DNA]</scope>
    <source>
        <strain>DSM 44549 / YS-314 / AJ 12310 / JCM 11189 / NBRC 100395</strain>
    </source>
</reference>
<proteinExistence type="inferred from homology"/>
<sequence length="285" mass="31163">MPELPEVEVVRRGLEEHMVGRTIVSAAVVHPRTARNQAGGGAEIEANLTGLRVGATNRRGKFLWLELDDVAQQAPSGLGLLVHLGMSGQMLVKSPDATLNPHLRARAELDDGNEVWFVDQRTFGYWWLGELVDGVPGRVSHIARDLLDDALDIPALAAVLKTKNTEIKRLLLNQEIVSGIGNIYADEMLWEAGIHPRQKASRISLTRLVALLEAGREVMTRALDQGGTSFDALYVNVNGASGYFSLSLNAYGQAGKPCARCGTPIARETFMNRGSHFCNRCQKVR</sequence>
<feature type="initiator methionine" description="Removed" evidence="1">
    <location>
        <position position="1"/>
    </location>
</feature>
<feature type="chain" id="PRO_0000170819" description="Formamidopyrimidine-DNA glycosylase">
    <location>
        <begin position="2"/>
        <end position="285"/>
    </location>
</feature>
<feature type="zinc finger region" description="FPG-type" evidence="2">
    <location>
        <begin position="249"/>
        <end position="283"/>
    </location>
</feature>
<feature type="active site" description="Schiff-base intermediate with DNA" evidence="2">
    <location>
        <position position="2"/>
    </location>
</feature>
<feature type="active site" description="Proton donor" evidence="2">
    <location>
        <position position="3"/>
    </location>
</feature>
<feature type="active site" description="Proton donor; for beta-elimination activity" evidence="2">
    <location>
        <position position="61"/>
    </location>
</feature>
<feature type="active site" description="Proton donor; for delta-elimination activity" evidence="2">
    <location>
        <position position="273"/>
    </location>
</feature>
<feature type="binding site" evidence="2">
    <location>
        <position position="102"/>
    </location>
    <ligand>
        <name>DNA</name>
        <dbReference type="ChEBI" id="CHEBI:16991"/>
    </ligand>
</feature>
<feature type="binding site" evidence="2">
    <location>
        <position position="121"/>
    </location>
    <ligand>
        <name>DNA</name>
        <dbReference type="ChEBI" id="CHEBI:16991"/>
    </ligand>
</feature>
<feature type="binding site" evidence="2">
    <location>
        <position position="163"/>
    </location>
    <ligand>
        <name>DNA</name>
        <dbReference type="ChEBI" id="CHEBI:16991"/>
    </ligand>
</feature>
<keyword id="KW-0227">DNA damage</keyword>
<keyword id="KW-0234">DNA repair</keyword>
<keyword id="KW-0238">DNA-binding</keyword>
<keyword id="KW-0326">Glycosidase</keyword>
<keyword id="KW-0378">Hydrolase</keyword>
<keyword id="KW-0456">Lyase</keyword>
<keyword id="KW-0479">Metal-binding</keyword>
<keyword id="KW-0511">Multifunctional enzyme</keyword>
<keyword id="KW-1185">Reference proteome</keyword>
<keyword id="KW-0862">Zinc</keyword>
<keyword id="KW-0863">Zinc-finger</keyword>
<organism>
    <name type="scientific">Corynebacterium efficiens (strain DSM 44549 / YS-314 / AJ 12310 / JCM 11189 / NBRC 100395)</name>
    <dbReference type="NCBI Taxonomy" id="196164"/>
    <lineage>
        <taxon>Bacteria</taxon>
        <taxon>Bacillati</taxon>
        <taxon>Actinomycetota</taxon>
        <taxon>Actinomycetes</taxon>
        <taxon>Mycobacteriales</taxon>
        <taxon>Corynebacteriaceae</taxon>
        <taxon>Corynebacterium</taxon>
    </lineage>
</organism>
<dbReference type="EC" id="3.2.2.23" evidence="2"/>
<dbReference type="EC" id="4.2.99.18" evidence="2"/>
<dbReference type="EMBL" id="BA000035">
    <property type="protein sequence ID" value="BAC18785.1"/>
    <property type="molecule type" value="Genomic_DNA"/>
</dbReference>
<dbReference type="RefSeq" id="WP_006767972.1">
    <property type="nucleotide sequence ID" value="NC_004369.1"/>
</dbReference>
<dbReference type="SMR" id="Q8FP17"/>
<dbReference type="STRING" id="196164.gene:10742403"/>
<dbReference type="KEGG" id="cef:CE1975"/>
<dbReference type="eggNOG" id="COG0266">
    <property type="taxonomic scope" value="Bacteria"/>
</dbReference>
<dbReference type="HOGENOM" id="CLU_038423_1_2_11"/>
<dbReference type="OrthoDB" id="9800855at2"/>
<dbReference type="Proteomes" id="UP000001409">
    <property type="component" value="Chromosome"/>
</dbReference>
<dbReference type="GO" id="GO:0034039">
    <property type="term" value="F:8-oxo-7,8-dihydroguanine DNA N-glycosylase activity"/>
    <property type="evidence" value="ECO:0007669"/>
    <property type="project" value="TreeGrafter"/>
</dbReference>
<dbReference type="GO" id="GO:0140078">
    <property type="term" value="F:class I DNA-(apurinic or apyrimidinic site) endonuclease activity"/>
    <property type="evidence" value="ECO:0007669"/>
    <property type="project" value="UniProtKB-EC"/>
</dbReference>
<dbReference type="GO" id="GO:0003684">
    <property type="term" value="F:damaged DNA binding"/>
    <property type="evidence" value="ECO:0007669"/>
    <property type="project" value="InterPro"/>
</dbReference>
<dbReference type="GO" id="GO:0008270">
    <property type="term" value="F:zinc ion binding"/>
    <property type="evidence" value="ECO:0007669"/>
    <property type="project" value="UniProtKB-UniRule"/>
</dbReference>
<dbReference type="GO" id="GO:0006284">
    <property type="term" value="P:base-excision repair"/>
    <property type="evidence" value="ECO:0007669"/>
    <property type="project" value="InterPro"/>
</dbReference>
<dbReference type="CDD" id="cd08966">
    <property type="entry name" value="EcFpg-like_N"/>
    <property type="match status" value="1"/>
</dbReference>
<dbReference type="FunFam" id="1.10.8.50:FF:000003">
    <property type="entry name" value="Formamidopyrimidine-DNA glycosylase"/>
    <property type="match status" value="1"/>
</dbReference>
<dbReference type="Gene3D" id="1.10.8.50">
    <property type="match status" value="1"/>
</dbReference>
<dbReference type="Gene3D" id="3.20.190.10">
    <property type="entry name" value="MutM-like, N-terminal"/>
    <property type="match status" value="1"/>
</dbReference>
<dbReference type="HAMAP" id="MF_00103">
    <property type="entry name" value="Fapy_DNA_glycosyl"/>
    <property type="match status" value="1"/>
</dbReference>
<dbReference type="InterPro" id="IPR015886">
    <property type="entry name" value="DNA_glyclase/AP_lyase_DNA-bd"/>
</dbReference>
<dbReference type="InterPro" id="IPR015887">
    <property type="entry name" value="DNA_glyclase_Znf_dom_DNA_BS"/>
</dbReference>
<dbReference type="InterPro" id="IPR020629">
    <property type="entry name" value="Formamido-pyr_DNA_Glyclase"/>
</dbReference>
<dbReference type="InterPro" id="IPR012319">
    <property type="entry name" value="FPG_cat"/>
</dbReference>
<dbReference type="InterPro" id="IPR035937">
    <property type="entry name" value="MutM-like_N-ter"/>
</dbReference>
<dbReference type="InterPro" id="IPR010979">
    <property type="entry name" value="Ribosomal_uS13-like_H2TH"/>
</dbReference>
<dbReference type="InterPro" id="IPR000214">
    <property type="entry name" value="Znf_DNA_glyclase/AP_lyase"/>
</dbReference>
<dbReference type="InterPro" id="IPR010663">
    <property type="entry name" value="Znf_FPG/IleRS"/>
</dbReference>
<dbReference type="NCBIfam" id="TIGR00577">
    <property type="entry name" value="fpg"/>
    <property type="match status" value="1"/>
</dbReference>
<dbReference type="NCBIfam" id="NF002211">
    <property type="entry name" value="PRK01103.1"/>
    <property type="match status" value="1"/>
</dbReference>
<dbReference type="PANTHER" id="PTHR22993">
    <property type="entry name" value="FORMAMIDOPYRIMIDINE-DNA GLYCOSYLASE"/>
    <property type="match status" value="1"/>
</dbReference>
<dbReference type="PANTHER" id="PTHR22993:SF9">
    <property type="entry name" value="FORMAMIDOPYRIMIDINE-DNA GLYCOSYLASE"/>
    <property type="match status" value="1"/>
</dbReference>
<dbReference type="Pfam" id="PF01149">
    <property type="entry name" value="Fapy_DNA_glyco"/>
    <property type="match status" value="1"/>
</dbReference>
<dbReference type="Pfam" id="PF06831">
    <property type="entry name" value="H2TH"/>
    <property type="match status" value="1"/>
</dbReference>
<dbReference type="Pfam" id="PF06827">
    <property type="entry name" value="zf-FPG_IleRS"/>
    <property type="match status" value="1"/>
</dbReference>
<dbReference type="SMART" id="SM00898">
    <property type="entry name" value="Fapy_DNA_glyco"/>
    <property type="match status" value="1"/>
</dbReference>
<dbReference type="SMART" id="SM01232">
    <property type="entry name" value="H2TH"/>
    <property type="match status" value="1"/>
</dbReference>
<dbReference type="SUPFAM" id="SSF57716">
    <property type="entry name" value="Glucocorticoid receptor-like (DNA-binding domain)"/>
    <property type="match status" value="1"/>
</dbReference>
<dbReference type="SUPFAM" id="SSF81624">
    <property type="entry name" value="N-terminal domain of MutM-like DNA repair proteins"/>
    <property type="match status" value="1"/>
</dbReference>
<dbReference type="SUPFAM" id="SSF46946">
    <property type="entry name" value="S13-like H2TH domain"/>
    <property type="match status" value="1"/>
</dbReference>
<dbReference type="PROSITE" id="PS51068">
    <property type="entry name" value="FPG_CAT"/>
    <property type="match status" value="1"/>
</dbReference>
<dbReference type="PROSITE" id="PS01242">
    <property type="entry name" value="ZF_FPG_1"/>
    <property type="match status" value="1"/>
</dbReference>
<dbReference type="PROSITE" id="PS51066">
    <property type="entry name" value="ZF_FPG_2"/>
    <property type="match status" value="1"/>
</dbReference>
<comment type="function">
    <text evidence="2">Involved in base excision repair of DNA damaged by oxidation or by mutagenic agents. Acts as a DNA glycosylase that recognizes and removes damaged bases. Has a preference for oxidized purines, such as 7,8-dihydro-8-oxoguanine (8-oxoG). Has AP (apurinic/apyrimidinic) lyase activity and introduces nicks in the DNA strand. Cleaves the DNA backbone by beta-delta elimination to generate a single-strand break at the site of the removed base with both 3'- and 5'-phosphates.</text>
</comment>
<comment type="catalytic activity">
    <reaction evidence="2">
        <text>Hydrolysis of DNA containing ring-opened 7-methylguanine residues, releasing 2,6-diamino-4-hydroxy-5-(N-methyl)formamidopyrimidine.</text>
        <dbReference type="EC" id="3.2.2.23"/>
    </reaction>
</comment>
<comment type="catalytic activity">
    <reaction evidence="2">
        <text>2'-deoxyribonucleotide-(2'-deoxyribose 5'-phosphate)-2'-deoxyribonucleotide-DNA = a 3'-end 2'-deoxyribonucleotide-(2,3-dehydro-2,3-deoxyribose 5'-phosphate)-DNA + a 5'-end 5'-phospho-2'-deoxyribonucleoside-DNA + H(+)</text>
        <dbReference type="Rhea" id="RHEA:66592"/>
        <dbReference type="Rhea" id="RHEA-COMP:13180"/>
        <dbReference type="Rhea" id="RHEA-COMP:16897"/>
        <dbReference type="Rhea" id="RHEA-COMP:17067"/>
        <dbReference type="ChEBI" id="CHEBI:15378"/>
        <dbReference type="ChEBI" id="CHEBI:136412"/>
        <dbReference type="ChEBI" id="CHEBI:157695"/>
        <dbReference type="ChEBI" id="CHEBI:167181"/>
        <dbReference type="EC" id="4.2.99.18"/>
    </reaction>
</comment>
<comment type="cofactor">
    <cofactor evidence="2">
        <name>Zn(2+)</name>
        <dbReference type="ChEBI" id="CHEBI:29105"/>
    </cofactor>
    <text evidence="2">Binds 1 zinc ion per subunit.</text>
</comment>
<comment type="subunit">
    <text evidence="2">Monomer.</text>
</comment>
<comment type="similarity">
    <text evidence="2">Belongs to the FPG family.</text>
</comment>
<accession>Q8FP17</accession>
<gene>
    <name evidence="2" type="primary">mutM</name>
    <name evidence="2" type="synonym">fpg</name>
    <name type="ordered locus">CE1975</name>
</gene>